<reference key="1">
    <citation type="journal article" date="2006" name="Proc. Natl. Acad. Sci. U.S.A.">
        <title>The complete genome sequence of a chronic atrophic gastritis Helicobacter pylori strain: evolution during disease progression.</title>
        <authorList>
            <person name="Oh J.D."/>
            <person name="Kling-Baeckhed H."/>
            <person name="Giannakis M."/>
            <person name="Xu J."/>
            <person name="Fulton R.S."/>
            <person name="Fulton L.A."/>
            <person name="Cordum H.S."/>
            <person name="Wang C."/>
            <person name="Elliott G."/>
            <person name="Edwards J."/>
            <person name="Mardis E.R."/>
            <person name="Engstrand L.G."/>
            <person name="Gordon J.I."/>
        </authorList>
    </citation>
    <scope>NUCLEOTIDE SEQUENCE [LARGE SCALE GENOMIC DNA]</scope>
    <source>
        <strain>HPAG1</strain>
    </source>
</reference>
<organism>
    <name type="scientific">Helicobacter pylori (strain HPAG1)</name>
    <dbReference type="NCBI Taxonomy" id="357544"/>
    <lineage>
        <taxon>Bacteria</taxon>
        <taxon>Pseudomonadati</taxon>
        <taxon>Campylobacterota</taxon>
        <taxon>Epsilonproteobacteria</taxon>
        <taxon>Campylobacterales</taxon>
        <taxon>Helicobacteraceae</taxon>
        <taxon>Helicobacter</taxon>
    </lineage>
</organism>
<feature type="chain" id="PRO_1000020078" description="Methionyl-tRNA formyltransferase">
    <location>
        <begin position="1"/>
        <end position="305"/>
    </location>
</feature>
<feature type="binding site" evidence="1">
    <location>
        <begin position="111"/>
        <end position="114"/>
    </location>
    <ligand>
        <name>(6S)-5,6,7,8-tetrahydrofolate</name>
        <dbReference type="ChEBI" id="CHEBI:57453"/>
    </ligand>
</feature>
<gene>
    <name evidence="1" type="primary">fmt</name>
    <name type="ordered locus">HPAG1_1079</name>
</gene>
<evidence type="ECO:0000255" key="1">
    <source>
        <dbReference type="HAMAP-Rule" id="MF_00182"/>
    </source>
</evidence>
<comment type="function">
    <text evidence="1">Attaches a formyl group to the free amino group of methionyl-tRNA(fMet). The formyl group appears to play a dual role in the initiator identity of N-formylmethionyl-tRNA by promoting its recognition by IF2 and preventing the misappropriation of this tRNA by the elongation apparatus.</text>
</comment>
<comment type="catalytic activity">
    <reaction evidence="1">
        <text>L-methionyl-tRNA(fMet) + (6R)-10-formyltetrahydrofolate = N-formyl-L-methionyl-tRNA(fMet) + (6S)-5,6,7,8-tetrahydrofolate + H(+)</text>
        <dbReference type="Rhea" id="RHEA:24380"/>
        <dbReference type="Rhea" id="RHEA-COMP:9952"/>
        <dbReference type="Rhea" id="RHEA-COMP:9953"/>
        <dbReference type="ChEBI" id="CHEBI:15378"/>
        <dbReference type="ChEBI" id="CHEBI:57453"/>
        <dbReference type="ChEBI" id="CHEBI:78530"/>
        <dbReference type="ChEBI" id="CHEBI:78844"/>
        <dbReference type="ChEBI" id="CHEBI:195366"/>
        <dbReference type="EC" id="2.1.2.9"/>
    </reaction>
</comment>
<comment type="similarity">
    <text evidence="1">Belongs to the Fmt family.</text>
</comment>
<proteinExistence type="inferred from homology"/>
<sequence length="305" mass="34141">MRIVFMGTPGFAEVILRALVENKNNHIEVVGLFTQMDKPFGRKKELKAPETKTYILENHLNIPIFQPQSLKEPEVQILKDLKPDFIVVVAYGKILPKEVLTIAPCINAHASLLPKYRGASPIHEMILNDDRIYGISTMLMDLELDSGDILESASFLREDYLDLDALSLKLAHMGADLLFSTLKNFSSITRKPQDHMQATFCKKITKADGLVGFKDAKSLFLKSLAFKSWPEIFLENSLKLLEVGLVENEKSHKEGEILEIDEKGVLVGCLKGSVRVAWLQAVGKKPLKAKDYLNGRRLKIGGILA</sequence>
<accession>Q1CSC6</accession>
<name>FMT_HELPH</name>
<dbReference type="EC" id="2.1.2.9" evidence="1"/>
<dbReference type="EMBL" id="CP000241">
    <property type="protein sequence ID" value="ABF85146.1"/>
    <property type="molecule type" value="Genomic_DNA"/>
</dbReference>
<dbReference type="RefSeq" id="WP_001223461.1">
    <property type="nucleotide sequence ID" value="NC_008086.1"/>
</dbReference>
<dbReference type="SMR" id="Q1CSC6"/>
<dbReference type="KEGG" id="hpa:HPAG1_1079"/>
<dbReference type="HOGENOM" id="CLU_033347_1_1_7"/>
<dbReference type="GO" id="GO:0005829">
    <property type="term" value="C:cytosol"/>
    <property type="evidence" value="ECO:0007669"/>
    <property type="project" value="TreeGrafter"/>
</dbReference>
<dbReference type="GO" id="GO:0004479">
    <property type="term" value="F:methionyl-tRNA formyltransferase activity"/>
    <property type="evidence" value="ECO:0007669"/>
    <property type="project" value="UniProtKB-UniRule"/>
</dbReference>
<dbReference type="CDD" id="cd08646">
    <property type="entry name" value="FMT_core_Met-tRNA-FMT_N"/>
    <property type="match status" value="1"/>
</dbReference>
<dbReference type="CDD" id="cd08704">
    <property type="entry name" value="Met_tRNA_FMT_C"/>
    <property type="match status" value="1"/>
</dbReference>
<dbReference type="FunFam" id="3.40.50.12230:FF:000001">
    <property type="entry name" value="Methionyl-tRNA formyltransferase"/>
    <property type="match status" value="1"/>
</dbReference>
<dbReference type="Gene3D" id="3.40.50.12230">
    <property type="match status" value="1"/>
</dbReference>
<dbReference type="HAMAP" id="MF_00182">
    <property type="entry name" value="Formyl_trans"/>
    <property type="match status" value="1"/>
</dbReference>
<dbReference type="InterPro" id="IPR005794">
    <property type="entry name" value="Fmt"/>
</dbReference>
<dbReference type="InterPro" id="IPR005793">
    <property type="entry name" value="Formyl_trans_C"/>
</dbReference>
<dbReference type="InterPro" id="IPR002376">
    <property type="entry name" value="Formyl_transf_N"/>
</dbReference>
<dbReference type="InterPro" id="IPR036477">
    <property type="entry name" value="Formyl_transf_N_sf"/>
</dbReference>
<dbReference type="InterPro" id="IPR011034">
    <property type="entry name" value="Formyl_transferase-like_C_sf"/>
</dbReference>
<dbReference type="InterPro" id="IPR044135">
    <property type="entry name" value="Met-tRNA-FMT_C"/>
</dbReference>
<dbReference type="InterPro" id="IPR041711">
    <property type="entry name" value="Met-tRNA-FMT_N"/>
</dbReference>
<dbReference type="NCBIfam" id="TIGR00460">
    <property type="entry name" value="fmt"/>
    <property type="match status" value="1"/>
</dbReference>
<dbReference type="PANTHER" id="PTHR11138">
    <property type="entry name" value="METHIONYL-TRNA FORMYLTRANSFERASE"/>
    <property type="match status" value="1"/>
</dbReference>
<dbReference type="PANTHER" id="PTHR11138:SF5">
    <property type="entry name" value="METHIONYL-TRNA FORMYLTRANSFERASE, MITOCHONDRIAL"/>
    <property type="match status" value="1"/>
</dbReference>
<dbReference type="Pfam" id="PF02911">
    <property type="entry name" value="Formyl_trans_C"/>
    <property type="match status" value="1"/>
</dbReference>
<dbReference type="Pfam" id="PF00551">
    <property type="entry name" value="Formyl_trans_N"/>
    <property type="match status" value="1"/>
</dbReference>
<dbReference type="SUPFAM" id="SSF50486">
    <property type="entry name" value="FMT C-terminal domain-like"/>
    <property type="match status" value="1"/>
</dbReference>
<dbReference type="SUPFAM" id="SSF53328">
    <property type="entry name" value="Formyltransferase"/>
    <property type="match status" value="1"/>
</dbReference>
<protein>
    <recommendedName>
        <fullName evidence="1">Methionyl-tRNA formyltransferase</fullName>
        <ecNumber evidence="1">2.1.2.9</ecNumber>
    </recommendedName>
</protein>
<keyword id="KW-0648">Protein biosynthesis</keyword>
<keyword id="KW-0808">Transferase</keyword>